<protein>
    <recommendedName>
        <fullName evidence="1">DNA mismatch repair protein MutL</fullName>
    </recommendedName>
</protein>
<evidence type="ECO:0000255" key="1">
    <source>
        <dbReference type="HAMAP-Rule" id="MF_00149"/>
    </source>
</evidence>
<reference key="1">
    <citation type="journal article" date="2007" name="DNA Res.">
        <title>Complete genomic structure of the bloom-forming toxic cyanobacterium Microcystis aeruginosa NIES-843.</title>
        <authorList>
            <person name="Kaneko T."/>
            <person name="Nakajima N."/>
            <person name="Okamoto S."/>
            <person name="Suzuki I."/>
            <person name="Tanabe Y."/>
            <person name="Tamaoki M."/>
            <person name="Nakamura Y."/>
            <person name="Kasai F."/>
            <person name="Watanabe A."/>
            <person name="Kawashima K."/>
            <person name="Kishida Y."/>
            <person name="Ono A."/>
            <person name="Shimizu Y."/>
            <person name="Takahashi C."/>
            <person name="Minami C."/>
            <person name="Fujishiro T."/>
            <person name="Kohara M."/>
            <person name="Katoh M."/>
            <person name="Nakazaki N."/>
            <person name="Nakayama S."/>
            <person name="Yamada M."/>
            <person name="Tabata S."/>
            <person name="Watanabe M.M."/>
        </authorList>
    </citation>
    <scope>NUCLEOTIDE SEQUENCE [LARGE SCALE GENOMIC DNA]</scope>
    <source>
        <strain>NIES-843 / IAM M-247</strain>
    </source>
</reference>
<proteinExistence type="inferred from homology"/>
<comment type="function">
    <text evidence="1">This protein is involved in the repair of mismatches in DNA. It is required for dam-dependent methyl-directed DNA mismatch repair. May act as a 'molecular matchmaker', a protein that promotes the formation of a stable complex between two or more DNA-binding proteins in an ATP-dependent manner without itself being part of a final effector complex.</text>
</comment>
<comment type="similarity">
    <text evidence="1">Belongs to the DNA mismatch repair MutL/HexB family.</text>
</comment>
<organism>
    <name type="scientific">Microcystis aeruginosa (strain NIES-843 / IAM M-2473)</name>
    <dbReference type="NCBI Taxonomy" id="449447"/>
    <lineage>
        <taxon>Bacteria</taxon>
        <taxon>Bacillati</taxon>
        <taxon>Cyanobacteriota</taxon>
        <taxon>Cyanophyceae</taxon>
        <taxon>Oscillatoriophycideae</taxon>
        <taxon>Chroococcales</taxon>
        <taxon>Microcystaceae</taxon>
        <taxon>Microcystis</taxon>
    </lineage>
</organism>
<sequence length="550" mass="62509">MTLPIQVLPQDVIDLIAAGEVIDSLGAVVRELVENAIDAGADRITIDISPQNWRIQVSDNGRGMSREDLQLCSYAHSTSKIRQRDDLWQITSLGFRGEALHSIAQVAHLRVASRHDDDLGCYCLYNHQGEPGNLETIPIAIGTIVTVENLFGNFPVRRQALPSINKQLKDIQTLIHNFALCHPQITWQVFQDHQDWLRISPGKDASQILPQLVKSLHFNDLASLKLDLTTPDAESAQIELVIGLPDRISRHQPDWVRIAVNGRMVRSSELEQAIFEAFARTVPKDRYPVCFLHLHLNPRSIDWNRHPAKAEIYLHNLIFWQEQIISAIDKALGLNPEHIPEKAQNQRVSQILKAAEEKSTYTIGEKSPKNRLELKAVAQIHQTYIVAEHPHGLWLVEQHIAHERVLYERLEDNWEIVPLDTPIILNQLTTRQIEQLQRLGLEIASFGDRSWAIRSIPVLLKEREDRADALLELSLGGDLQTAQVATACRSAIRNGTALSLKEMQNLLDDWQNTRNPRTCPHGRPIYLSLEETSLARFFRRHWVIGKSHGI</sequence>
<keyword id="KW-0227">DNA damage</keyword>
<keyword id="KW-0234">DNA repair</keyword>
<dbReference type="EMBL" id="AP009552">
    <property type="protein sequence ID" value="BAG04049.1"/>
    <property type="molecule type" value="Genomic_DNA"/>
</dbReference>
<dbReference type="RefSeq" id="WP_012266901.1">
    <property type="nucleotide sequence ID" value="NC_010296.1"/>
</dbReference>
<dbReference type="SMR" id="B0JS91"/>
<dbReference type="STRING" id="449447.MAE_42270"/>
<dbReference type="PaxDb" id="449447-MAE_42270"/>
<dbReference type="EnsemblBacteria" id="BAG04049">
    <property type="protein sequence ID" value="BAG04049"/>
    <property type="gene ID" value="MAE_42270"/>
</dbReference>
<dbReference type="KEGG" id="mar:MAE_42270"/>
<dbReference type="PATRIC" id="fig|449447.4.peg.3827"/>
<dbReference type="eggNOG" id="COG0323">
    <property type="taxonomic scope" value="Bacteria"/>
</dbReference>
<dbReference type="HOGENOM" id="CLU_004131_4_1_3"/>
<dbReference type="BioCyc" id="MAER449447:MAE_RS18315-MONOMER"/>
<dbReference type="Proteomes" id="UP000001510">
    <property type="component" value="Chromosome"/>
</dbReference>
<dbReference type="GO" id="GO:0032300">
    <property type="term" value="C:mismatch repair complex"/>
    <property type="evidence" value="ECO:0007669"/>
    <property type="project" value="InterPro"/>
</dbReference>
<dbReference type="GO" id="GO:0005524">
    <property type="term" value="F:ATP binding"/>
    <property type="evidence" value="ECO:0007669"/>
    <property type="project" value="InterPro"/>
</dbReference>
<dbReference type="GO" id="GO:0016887">
    <property type="term" value="F:ATP hydrolysis activity"/>
    <property type="evidence" value="ECO:0007669"/>
    <property type="project" value="InterPro"/>
</dbReference>
<dbReference type="GO" id="GO:0140664">
    <property type="term" value="F:ATP-dependent DNA damage sensor activity"/>
    <property type="evidence" value="ECO:0007669"/>
    <property type="project" value="InterPro"/>
</dbReference>
<dbReference type="GO" id="GO:0030983">
    <property type="term" value="F:mismatched DNA binding"/>
    <property type="evidence" value="ECO:0007669"/>
    <property type="project" value="InterPro"/>
</dbReference>
<dbReference type="GO" id="GO:0006298">
    <property type="term" value="P:mismatch repair"/>
    <property type="evidence" value="ECO:0007669"/>
    <property type="project" value="UniProtKB-UniRule"/>
</dbReference>
<dbReference type="CDD" id="cd16926">
    <property type="entry name" value="HATPase_MutL-MLH-PMS-like"/>
    <property type="match status" value="1"/>
</dbReference>
<dbReference type="CDD" id="cd00782">
    <property type="entry name" value="MutL_Trans"/>
    <property type="match status" value="1"/>
</dbReference>
<dbReference type="FunFam" id="3.30.565.10:FF:000003">
    <property type="entry name" value="DNA mismatch repair endonuclease MutL"/>
    <property type="match status" value="1"/>
</dbReference>
<dbReference type="Gene3D" id="3.30.230.10">
    <property type="match status" value="1"/>
</dbReference>
<dbReference type="Gene3D" id="3.30.565.10">
    <property type="entry name" value="Histidine kinase-like ATPase, C-terminal domain"/>
    <property type="match status" value="1"/>
</dbReference>
<dbReference type="Gene3D" id="3.30.1540.20">
    <property type="entry name" value="MutL, C-terminal domain, dimerisation subdomain"/>
    <property type="match status" value="1"/>
</dbReference>
<dbReference type="Gene3D" id="3.30.1370.100">
    <property type="entry name" value="MutL, C-terminal domain, regulatory subdomain"/>
    <property type="match status" value="1"/>
</dbReference>
<dbReference type="HAMAP" id="MF_00149">
    <property type="entry name" value="DNA_mis_repair"/>
    <property type="match status" value="1"/>
</dbReference>
<dbReference type="InterPro" id="IPR014762">
    <property type="entry name" value="DNA_mismatch_repair_CS"/>
</dbReference>
<dbReference type="InterPro" id="IPR020667">
    <property type="entry name" value="DNA_mismatch_repair_MutL"/>
</dbReference>
<dbReference type="InterPro" id="IPR013507">
    <property type="entry name" value="DNA_mismatch_S5_2-like"/>
</dbReference>
<dbReference type="InterPro" id="IPR036890">
    <property type="entry name" value="HATPase_C_sf"/>
</dbReference>
<dbReference type="InterPro" id="IPR002099">
    <property type="entry name" value="MutL/Mlh/PMS"/>
</dbReference>
<dbReference type="InterPro" id="IPR038973">
    <property type="entry name" value="MutL/Mlh/Pms-like"/>
</dbReference>
<dbReference type="InterPro" id="IPR014790">
    <property type="entry name" value="MutL_C"/>
</dbReference>
<dbReference type="InterPro" id="IPR042120">
    <property type="entry name" value="MutL_C_dimsub"/>
</dbReference>
<dbReference type="InterPro" id="IPR042121">
    <property type="entry name" value="MutL_C_regsub"/>
</dbReference>
<dbReference type="InterPro" id="IPR037198">
    <property type="entry name" value="MutL_C_sf"/>
</dbReference>
<dbReference type="InterPro" id="IPR020568">
    <property type="entry name" value="Ribosomal_Su5_D2-typ_SF"/>
</dbReference>
<dbReference type="InterPro" id="IPR014721">
    <property type="entry name" value="Ribsml_uS5_D2-typ_fold_subgr"/>
</dbReference>
<dbReference type="NCBIfam" id="TIGR00585">
    <property type="entry name" value="mutl"/>
    <property type="match status" value="1"/>
</dbReference>
<dbReference type="NCBIfam" id="NF000951">
    <property type="entry name" value="PRK00095.2-1"/>
    <property type="match status" value="1"/>
</dbReference>
<dbReference type="PANTHER" id="PTHR10073">
    <property type="entry name" value="DNA MISMATCH REPAIR PROTEIN MLH, PMS, MUTL"/>
    <property type="match status" value="1"/>
</dbReference>
<dbReference type="PANTHER" id="PTHR10073:SF12">
    <property type="entry name" value="DNA MISMATCH REPAIR PROTEIN MLH1"/>
    <property type="match status" value="1"/>
</dbReference>
<dbReference type="Pfam" id="PF01119">
    <property type="entry name" value="DNA_mis_repair"/>
    <property type="match status" value="1"/>
</dbReference>
<dbReference type="Pfam" id="PF13589">
    <property type="entry name" value="HATPase_c_3"/>
    <property type="match status" value="1"/>
</dbReference>
<dbReference type="Pfam" id="PF08676">
    <property type="entry name" value="MutL_C"/>
    <property type="match status" value="1"/>
</dbReference>
<dbReference type="SMART" id="SM01340">
    <property type="entry name" value="DNA_mis_repair"/>
    <property type="match status" value="1"/>
</dbReference>
<dbReference type="SMART" id="SM00853">
    <property type="entry name" value="MutL_C"/>
    <property type="match status" value="1"/>
</dbReference>
<dbReference type="SUPFAM" id="SSF55874">
    <property type="entry name" value="ATPase domain of HSP90 chaperone/DNA topoisomerase II/histidine kinase"/>
    <property type="match status" value="1"/>
</dbReference>
<dbReference type="SUPFAM" id="SSF118116">
    <property type="entry name" value="DNA mismatch repair protein MutL"/>
    <property type="match status" value="1"/>
</dbReference>
<dbReference type="SUPFAM" id="SSF54211">
    <property type="entry name" value="Ribosomal protein S5 domain 2-like"/>
    <property type="match status" value="1"/>
</dbReference>
<dbReference type="PROSITE" id="PS00058">
    <property type="entry name" value="DNA_MISMATCH_REPAIR_1"/>
    <property type="match status" value="1"/>
</dbReference>
<accession>B0JS91</accession>
<feature type="chain" id="PRO_1000096665" description="DNA mismatch repair protein MutL">
    <location>
        <begin position="1"/>
        <end position="550"/>
    </location>
</feature>
<gene>
    <name evidence="1" type="primary">mutL</name>
    <name type="ordered locus">MAE_42270</name>
</gene>
<name>MUTL_MICAN</name>